<feature type="chain" id="PRO_0000397023" description="Proteasome-associated ATPase">
    <location>
        <begin position="1"/>
        <end position="588"/>
    </location>
</feature>
<feature type="region of interest" description="Disordered" evidence="2">
    <location>
        <begin position="1"/>
        <end position="23"/>
    </location>
</feature>
<feature type="region of interest" description="Docks into pockets in the proteasome alpha-ring" evidence="1">
    <location>
        <begin position="587"/>
        <end position="588"/>
    </location>
</feature>
<feature type="coiled-coil region" evidence="1">
    <location>
        <begin position="47"/>
        <end position="94"/>
    </location>
</feature>
<feature type="compositionally biased region" description="Basic and acidic residues" evidence="2">
    <location>
        <begin position="1"/>
        <end position="10"/>
    </location>
</feature>
<feature type="binding site" evidence="1">
    <location>
        <begin position="276"/>
        <end position="281"/>
    </location>
    <ligand>
        <name>ATP</name>
        <dbReference type="ChEBI" id="CHEBI:30616"/>
    </ligand>
</feature>
<evidence type="ECO:0000255" key="1">
    <source>
        <dbReference type="HAMAP-Rule" id="MF_02112"/>
    </source>
</evidence>
<evidence type="ECO:0000256" key="2">
    <source>
        <dbReference type="SAM" id="MobiDB-lite"/>
    </source>
</evidence>
<evidence type="ECO:0000305" key="3"/>
<organism>
    <name type="scientific">Streptomyces coelicolor (strain ATCC BAA-471 / A3(2) / M145)</name>
    <dbReference type="NCBI Taxonomy" id="100226"/>
    <lineage>
        <taxon>Bacteria</taxon>
        <taxon>Bacillati</taxon>
        <taxon>Actinomycetota</taxon>
        <taxon>Actinomycetes</taxon>
        <taxon>Kitasatosporales</taxon>
        <taxon>Streptomycetaceae</taxon>
        <taxon>Streptomyces</taxon>
        <taxon>Streptomyces albidoflavus group</taxon>
    </lineage>
</organism>
<reference key="1">
    <citation type="journal article" date="1998" name="J. Bacteriol.">
        <title>The 20S proteasome of Streptomyces coelicolor.</title>
        <authorList>
            <person name="Nagy I."/>
            <person name="Tamura T."/>
            <person name="Vanderleyden J."/>
            <person name="Baumeister W."/>
            <person name="De Mot R."/>
        </authorList>
    </citation>
    <scope>NUCLEOTIDE SEQUENCE [GENOMIC DNA]</scope>
    <source>
        <strain>ATCC BAA-471 / A3(2) / M145</strain>
    </source>
</reference>
<reference key="2">
    <citation type="journal article" date="2002" name="Nature">
        <title>Complete genome sequence of the model actinomycete Streptomyces coelicolor A3(2).</title>
        <authorList>
            <person name="Bentley S.D."/>
            <person name="Chater K.F."/>
            <person name="Cerdeno-Tarraga A.-M."/>
            <person name="Challis G.L."/>
            <person name="Thomson N.R."/>
            <person name="James K.D."/>
            <person name="Harris D.E."/>
            <person name="Quail M.A."/>
            <person name="Kieser H."/>
            <person name="Harper D."/>
            <person name="Bateman A."/>
            <person name="Brown S."/>
            <person name="Chandra G."/>
            <person name="Chen C.W."/>
            <person name="Collins M."/>
            <person name="Cronin A."/>
            <person name="Fraser A."/>
            <person name="Goble A."/>
            <person name="Hidalgo J."/>
            <person name="Hornsby T."/>
            <person name="Howarth S."/>
            <person name="Huang C.-H."/>
            <person name="Kieser T."/>
            <person name="Larke L."/>
            <person name="Murphy L.D."/>
            <person name="Oliver K."/>
            <person name="O'Neil S."/>
            <person name="Rabbinowitsch E."/>
            <person name="Rajandream M.A."/>
            <person name="Rutherford K.M."/>
            <person name="Rutter S."/>
            <person name="Seeger K."/>
            <person name="Saunders D."/>
            <person name="Sharp S."/>
            <person name="Squares R."/>
            <person name="Squares S."/>
            <person name="Taylor K."/>
            <person name="Warren T."/>
            <person name="Wietzorrek A."/>
            <person name="Woodward J.R."/>
            <person name="Barrell B.G."/>
            <person name="Parkhill J."/>
            <person name="Hopwood D.A."/>
        </authorList>
    </citation>
    <scope>NUCLEOTIDE SEQUENCE [LARGE SCALE GENOMIC DNA]</scope>
    <source>
        <strain>ATCC BAA-471 / A3(2) / M145</strain>
    </source>
</reference>
<gene>
    <name evidence="1" type="primary">arc</name>
    <name type="ordered locus">SCO1648</name>
    <name type="ORF">SCI41.31c</name>
</gene>
<protein>
    <recommendedName>
        <fullName evidence="1">Proteasome-associated ATPase</fullName>
    </recommendedName>
    <alternativeName>
        <fullName evidence="1">AAA ATPase forming ring-shaped complexes</fullName>
        <shortName evidence="1">ARC</shortName>
    </alternativeName>
    <alternativeName>
        <fullName evidence="1">Proteasomal ATPase</fullName>
    </alternativeName>
</protein>
<keyword id="KW-0067">ATP-binding</keyword>
<keyword id="KW-0143">Chaperone</keyword>
<keyword id="KW-0175">Coiled coil</keyword>
<keyword id="KW-0547">Nucleotide-binding</keyword>
<keyword id="KW-0647">Proteasome</keyword>
<keyword id="KW-1185">Reference proteome</keyword>
<name>ARC_STRCO</name>
<accession>Q9RJ58</accession>
<accession>O87594</accession>
<comment type="function">
    <text evidence="1">ATPase which is responsible for recognizing, binding, unfolding and translocation of pupylated proteins into the bacterial 20S proteasome core particle. May be essential for opening the gate of the 20S proteasome via an interaction with its C-terminus, thereby allowing substrate entry and access to the site of proteolysis. Thus, the C-termini of the proteasomal ATPase may function like a 'key in a lock' to induce gate opening and therefore regulate proteolysis.</text>
</comment>
<comment type="pathway">
    <text evidence="1">Protein degradation; proteasomal Pup-dependent pathway.</text>
</comment>
<comment type="subunit">
    <text evidence="1">Homohexamer. Assembles into a hexameric ring structure that caps the 20S proteasome core. Strongly interacts with the prokaryotic ubiquitin-like protein Pup through a hydrophobic interface; the interacting region of ARC lies in its N-terminal coiled-coil domain. There is one Pup binding site per ARC hexamer ring. Upon ATP-binding, the C-terminus of ARC interacts with the alpha-rings of the proteasome core, possibly by binding to the intersubunit pockets.</text>
</comment>
<comment type="domain">
    <text evidence="1">Consists of three main regions, an N-terminal coiled-coil domain that binds to protein Pup and functions as a docking station, an interdomain involved in ARC hexamerization, and a C-terminal ATPase domain of the AAA type.</text>
</comment>
<comment type="similarity">
    <text evidence="1">Belongs to the AAA ATPase family.</text>
</comment>
<comment type="sequence caution" evidence="3">
    <conflict type="erroneous initiation">
        <sequence resource="EMBL-CDS" id="AAC64282"/>
    </conflict>
    <text>Truncated N-terminus.</text>
</comment>
<proteinExistence type="inferred from homology"/>
<sequence length="588" mass="65174">MAAHDDDMNRGIRPGRGSEDPAGQVAYLEQEIAVLRRKLAESPRHTRILEERIVELQTNLAGVSAQNERLAGTLREARDQIVALKEEVDRLAQPPAGFGVFLQANEDGTADIFTGGRKLRVNVSPSVELDELRRGQEVMLNEALNVVEAMEYESVGDIVTLKEILEDGERALVLGHTDEERVVRLAEPLRGLTIRPGDALLLEPRSGYVYEVVPKSEVEELVLEEVPDIGYEQIGGLGGQIEMIRDAVELPYLYPDLFREHELRPPKGVLLYGPPGCGKTLIAKAVANSLAKKVAEVTGQAAGKSFFLNIKGPELLNKYVGETERQIRLVFQRAREKASEGTPVIVFFDEMESLFRTRGSGVSSDVENTIVPQLLAEIDGVEGLQNVVVIGASNREDMIDPAILRPGRLDVKIKIERPDAEAAKDIFGKYLTERLPLHSDDLAEHEKDKSATVSSMIQTAVEQMYAESEENRFLEVTYANGDKEVLYFKDFNSGAMIENIVGRAKKMAIKDFLDKNQKGLRVSHLLQACVDEFKENEDLPNTTNPDDWARISGKKGERIVYIRTLVTGKQGADTGRSIDTVANTGQYL</sequence>
<dbReference type="EMBL" id="AF086832">
    <property type="protein sequence ID" value="AAC64282.1"/>
    <property type="status" value="ALT_INIT"/>
    <property type="molecule type" value="Genomic_DNA"/>
</dbReference>
<dbReference type="EMBL" id="AL939109">
    <property type="protein sequence ID" value="CAB59501.1"/>
    <property type="molecule type" value="Genomic_DNA"/>
</dbReference>
<dbReference type="RefSeq" id="NP_625923.1">
    <property type="nucleotide sequence ID" value="NC_003888.3"/>
</dbReference>
<dbReference type="RefSeq" id="WP_011027900.1">
    <property type="nucleotide sequence ID" value="NZ_VNID01000018.1"/>
</dbReference>
<dbReference type="SMR" id="Q9RJ58"/>
<dbReference type="FunCoup" id="Q9RJ58">
    <property type="interactions" value="154"/>
</dbReference>
<dbReference type="STRING" id="100226.gene:17759241"/>
<dbReference type="PaxDb" id="100226-SCO1648"/>
<dbReference type="GeneID" id="91387379"/>
<dbReference type="KEGG" id="sco:SCO1648"/>
<dbReference type="PATRIC" id="fig|100226.15.peg.1662"/>
<dbReference type="eggNOG" id="COG1222">
    <property type="taxonomic scope" value="Bacteria"/>
</dbReference>
<dbReference type="HOGENOM" id="CLU_036054_0_0_11"/>
<dbReference type="InParanoid" id="Q9RJ58"/>
<dbReference type="OrthoDB" id="9809379at2"/>
<dbReference type="PhylomeDB" id="Q9RJ58"/>
<dbReference type="UniPathway" id="UPA00997"/>
<dbReference type="Proteomes" id="UP000001973">
    <property type="component" value="Chromosome"/>
</dbReference>
<dbReference type="GO" id="GO:0000502">
    <property type="term" value="C:proteasome complex"/>
    <property type="evidence" value="ECO:0007669"/>
    <property type="project" value="UniProtKB-KW"/>
</dbReference>
<dbReference type="GO" id="GO:0005524">
    <property type="term" value="F:ATP binding"/>
    <property type="evidence" value="ECO:0007669"/>
    <property type="project" value="UniProtKB-UniRule"/>
</dbReference>
<dbReference type="GO" id="GO:0016887">
    <property type="term" value="F:ATP hydrolysis activity"/>
    <property type="evidence" value="ECO:0000318"/>
    <property type="project" value="GO_Central"/>
</dbReference>
<dbReference type="GO" id="GO:0019941">
    <property type="term" value="P:modification-dependent protein catabolic process"/>
    <property type="evidence" value="ECO:0007669"/>
    <property type="project" value="InterPro"/>
</dbReference>
<dbReference type="GO" id="GO:0010498">
    <property type="term" value="P:proteasomal protein catabolic process"/>
    <property type="evidence" value="ECO:0007669"/>
    <property type="project" value="InterPro"/>
</dbReference>
<dbReference type="FunFam" id="1.20.5.170:FF:000018">
    <property type="entry name" value="AAA ATPase forming ring-shaped complexes"/>
    <property type="match status" value="1"/>
</dbReference>
<dbReference type="FunFam" id="2.40.50.140:FF:000109">
    <property type="entry name" value="AAA ATPase forming ring-shaped complexes"/>
    <property type="match status" value="1"/>
</dbReference>
<dbReference type="FunFam" id="3.40.50.300:FF:000155">
    <property type="entry name" value="AAA ATPase forming ring-shaped complexes"/>
    <property type="match status" value="1"/>
</dbReference>
<dbReference type="Gene3D" id="1.10.8.60">
    <property type="match status" value="1"/>
</dbReference>
<dbReference type="Gene3D" id="1.20.5.170">
    <property type="match status" value="1"/>
</dbReference>
<dbReference type="Gene3D" id="2.40.50.140">
    <property type="entry name" value="Nucleic acid-binding proteins"/>
    <property type="match status" value="2"/>
</dbReference>
<dbReference type="Gene3D" id="3.40.50.300">
    <property type="entry name" value="P-loop containing nucleotide triphosphate hydrolases"/>
    <property type="match status" value="1"/>
</dbReference>
<dbReference type="HAMAP" id="MF_02112">
    <property type="entry name" value="ARC_ATPase"/>
    <property type="match status" value="1"/>
</dbReference>
<dbReference type="InterPro" id="IPR003593">
    <property type="entry name" value="AAA+_ATPase"/>
</dbReference>
<dbReference type="InterPro" id="IPR050168">
    <property type="entry name" value="AAA_ATPase_domain"/>
</dbReference>
<dbReference type="InterPro" id="IPR003959">
    <property type="entry name" value="ATPase_AAA_core"/>
</dbReference>
<dbReference type="InterPro" id="IPR003960">
    <property type="entry name" value="ATPase_AAA_CS"/>
</dbReference>
<dbReference type="InterPro" id="IPR012340">
    <property type="entry name" value="NA-bd_OB-fold"/>
</dbReference>
<dbReference type="InterPro" id="IPR027417">
    <property type="entry name" value="P-loop_NTPase"/>
</dbReference>
<dbReference type="InterPro" id="IPR032501">
    <property type="entry name" value="Prot_ATP_ID_OB_2nd"/>
</dbReference>
<dbReference type="InterPro" id="IPR041626">
    <property type="entry name" value="Prot_ATP_ID_OB_N"/>
</dbReference>
<dbReference type="InterPro" id="IPR022482">
    <property type="entry name" value="Proteasome_ATPase"/>
</dbReference>
<dbReference type="NCBIfam" id="TIGR03689">
    <property type="entry name" value="pup_AAA"/>
    <property type="match status" value="1"/>
</dbReference>
<dbReference type="PANTHER" id="PTHR23077">
    <property type="entry name" value="AAA-FAMILY ATPASE"/>
    <property type="match status" value="1"/>
</dbReference>
<dbReference type="PANTHER" id="PTHR23077:SF144">
    <property type="entry name" value="PROTEASOME-ASSOCIATED ATPASE"/>
    <property type="match status" value="1"/>
</dbReference>
<dbReference type="Pfam" id="PF00004">
    <property type="entry name" value="AAA"/>
    <property type="match status" value="1"/>
</dbReference>
<dbReference type="Pfam" id="PF16450">
    <property type="entry name" value="Prot_ATP_ID_OB_C"/>
    <property type="match status" value="1"/>
</dbReference>
<dbReference type="Pfam" id="PF17758">
    <property type="entry name" value="Prot_ATP_ID_OB_N"/>
    <property type="match status" value="1"/>
</dbReference>
<dbReference type="SMART" id="SM00382">
    <property type="entry name" value="AAA"/>
    <property type="match status" value="1"/>
</dbReference>
<dbReference type="SUPFAM" id="SSF52540">
    <property type="entry name" value="P-loop containing nucleoside triphosphate hydrolases"/>
    <property type="match status" value="1"/>
</dbReference>
<dbReference type="PROSITE" id="PS00674">
    <property type="entry name" value="AAA"/>
    <property type="match status" value="1"/>
</dbReference>